<feature type="chain" id="PRO_1000100238" description="Dihydroorotate dehydrogenase B (NAD(+)), catalytic subunit">
    <location>
        <begin position="1"/>
        <end position="301"/>
    </location>
</feature>
<feature type="active site" description="Nucleophile">
    <location>
        <position position="125"/>
    </location>
</feature>
<feature type="binding site" evidence="1">
    <location>
        <begin position="44"/>
        <end position="45"/>
    </location>
    <ligand>
        <name>FMN</name>
        <dbReference type="ChEBI" id="CHEBI:58210"/>
    </ligand>
</feature>
<feature type="binding site" evidence="1">
    <location>
        <position position="44"/>
    </location>
    <ligand>
        <name>substrate</name>
    </ligand>
</feature>
<feature type="binding site" evidence="1">
    <location>
        <begin position="68"/>
        <end position="72"/>
    </location>
    <ligand>
        <name>substrate</name>
    </ligand>
</feature>
<feature type="binding site" evidence="1">
    <location>
        <position position="122"/>
    </location>
    <ligand>
        <name>FMN</name>
        <dbReference type="ChEBI" id="CHEBI:58210"/>
    </ligand>
</feature>
<feature type="binding site" evidence="1">
    <location>
        <position position="122"/>
    </location>
    <ligand>
        <name>substrate</name>
    </ligand>
</feature>
<feature type="binding site" evidence="1">
    <location>
        <position position="160"/>
    </location>
    <ligand>
        <name>FMN</name>
        <dbReference type="ChEBI" id="CHEBI:58210"/>
    </ligand>
</feature>
<feature type="binding site" evidence="1">
    <location>
        <position position="186"/>
    </location>
    <ligand>
        <name>FMN</name>
        <dbReference type="ChEBI" id="CHEBI:58210"/>
    </ligand>
</feature>
<feature type="binding site" evidence="1">
    <location>
        <begin position="187"/>
        <end position="188"/>
    </location>
    <ligand>
        <name>substrate</name>
    </ligand>
</feature>
<feature type="binding site" evidence="1">
    <location>
        <position position="212"/>
    </location>
    <ligand>
        <name>FMN</name>
        <dbReference type="ChEBI" id="CHEBI:58210"/>
    </ligand>
</feature>
<feature type="binding site" evidence="1">
    <location>
        <begin position="238"/>
        <end position="239"/>
    </location>
    <ligand>
        <name>FMN</name>
        <dbReference type="ChEBI" id="CHEBI:58210"/>
    </ligand>
</feature>
<feature type="binding site" evidence="1">
    <location>
        <begin position="260"/>
        <end position="261"/>
    </location>
    <ligand>
        <name>FMN</name>
        <dbReference type="ChEBI" id="CHEBI:58210"/>
    </ligand>
</feature>
<reference key="1">
    <citation type="journal article" date="2006" name="Science">
        <title>Genome of rice cluster I archaea -- the key methane producers in the rice rhizosphere.</title>
        <authorList>
            <person name="Erkel C."/>
            <person name="Kube M."/>
            <person name="Reinhardt R."/>
            <person name="Liesack W."/>
        </authorList>
    </citation>
    <scope>NUCLEOTIDE SEQUENCE [LARGE SCALE GENOMIC DNA]</scope>
    <source>
        <strain>DSM 22066 / NBRC 105507 / MRE50</strain>
    </source>
</reference>
<accession>Q0W8E1</accession>
<evidence type="ECO:0000250" key="1"/>
<evidence type="ECO:0000305" key="2"/>
<organism>
    <name type="scientific">Methanocella arvoryzae (strain DSM 22066 / NBRC 105507 / MRE50)</name>
    <dbReference type="NCBI Taxonomy" id="351160"/>
    <lineage>
        <taxon>Archaea</taxon>
        <taxon>Methanobacteriati</taxon>
        <taxon>Methanobacteriota</taxon>
        <taxon>Stenosarchaea group</taxon>
        <taxon>Methanomicrobia</taxon>
        <taxon>Methanocellales</taxon>
        <taxon>Methanocellaceae</taxon>
        <taxon>Methanocella</taxon>
    </lineage>
</organism>
<proteinExistence type="inferred from homology"/>
<gene>
    <name type="primary">pyrD</name>
    <name type="ordered locus">UNCMA_28250</name>
    <name type="ORF">LRC390</name>
</gene>
<sequence length="301" mass="31301">MKITCNAGGLTLKNPTILAAGVLGTTGASLKRIASMGAGAVVTKSIGTEPKPGHHNPSMIRLEEGYINAMGLPNPSFGEFRQELEIARESGVPVIASIFGATPEEFTAVANGLPGADAYELNVSCPHAKGYGMQCGTDPELVRSITKAVKAAVKVPVWVKLTPNVTDIRPIGLAAQEGGADAVVAINTLKAMAIDINTGWPILGNRSGGLSGPAVKPVAIKCVYDLYEVLDIPVIGVGGVSNWADAIEFMMAGACAVEIGSAVYEDIGTFASVSMGISNYLDRKNMKLDEIIGLAHRVVKQ</sequence>
<dbReference type="EC" id="1.3.1.14"/>
<dbReference type="EMBL" id="AM114193">
    <property type="protein sequence ID" value="CAJ35352.1"/>
    <property type="molecule type" value="Genomic_DNA"/>
</dbReference>
<dbReference type="RefSeq" id="WP_012037140.1">
    <property type="nucleotide sequence ID" value="NC_009464.1"/>
</dbReference>
<dbReference type="SMR" id="Q0W8E1"/>
<dbReference type="STRING" id="351160.LRC390"/>
<dbReference type="GeneID" id="5143788"/>
<dbReference type="KEGG" id="rci:LRC390"/>
<dbReference type="PATRIC" id="fig|351160.9.peg.2895"/>
<dbReference type="eggNOG" id="arCOG00603">
    <property type="taxonomic scope" value="Archaea"/>
</dbReference>
<dbReference type="OrthoDB" id="36608at2157"/>
<dbReference type="UniPathway" id="UPA00070">
    <property type="reaction ID" value="UER00945"/>
</dbReference>
<dbReference type="Proteomes" id="UP000000663">
    <property type="component" value="Chromosome"/>
</dbReference>
<dbReference type="GO" id="GO:0005737">
    <property type="term" value="C:cytoplasm"/>
    <property type="evidence" value="ECO:0007669"/>
    <property type="project" value="UniProtKB-SubCell"/>
</dbReference>
<dbReference type="GO" id="GO:0004589">
    <property type="term" value="F:dihydroorotate dehydrogenase (NAD+) activity"/>
    <property type="evidence" value="ECO:0007669"/>
    <property type="project" value="UniProtKB-EC"/>
</dbReference>
<dbReference type="GO" id="GO:0006207">
    <property type="term" value="P:'de novo' pyrimidine nucleobase biosynthetic process"/>
    <property type="evidence" value="ECO:0007669"/>
    <property type="project" value="InterPro"/>
</dbReference>
<dbReference type="GO" id="GO:0044205">
    <property type="term" value="P:'de novo' UMP biosynthetic process"/>
    <property type="evidence" value="ECO:0007669"/>
    <property type="project" value="UniProtKB-UniRule"/>
</dbReference>
<dbReference type="CDD" id="cd04740">
    <property type="entry name" value="DHOD_1B_like"/>
    <property type="match status" value="1"/>
</dbReference>
<dbReference type="FunFam" id="3.20.20.70:FF:000027">
    <property type="entry name" value="Dihydropyrimidine dehydrogenase [NADP(+)]"/>
    <property type="match status" value="1"/>
</dbReference>
<dbReference type="Gene3D" id="3.20.20.70">
    <property type="entry name" value="Aldolase class I"/>
    <property type="match status" value="1"/>
</dbReference>
<dbReference type="HAMAP" id="MF_00224">
    <property type="entry name" value="DHO_dh_type1"/>
    <property type="match status" value="1"/>
</dbReference>
<dbReference type="InterPro" id="IPR013785">
    <property type="entry name" value="Aldolase_TIM"/>
</dbReference>
<dbReference type="InterPro" id="IPR050074">
    <property type="entry name" value="DHO_dehydrogenase"/>
</dbReference>
<dbReference type="InterPro" id="IPR033888">
    <property type="entry name" value="DHOD_1B"/>
</dbReference>
<dbReference type="InterPro" id="IPR024920">
    <property type="entry name" value="Dihydroorotate_DH_1"/>
</dbReference>
<dbReference type="InterPro" id="IPR012135">
    <property type="entry name" value="Dihydroorotate_DH_1_2"/>
</dbReference>
<dbReference type="InterPro" id="IPR005720">
    <property type="entry name" value="Dihydroorotate_DH_cat"/>
</dbReference>
<dbReference type="InterPro" id="IPR001295">
    <property type="entry name" value="Dihydroorotate_DH_CS"/>
</dbReference>
<dbReference type="InterPro" id="IPR049622">
    <property type="entry name" value="Dihydroorotate_DH_I"/>
</dbReference>
<dbReference type="NCBIfam" id="NF005574">
    <property type="entry name" value="PRK07259.1"/>
    <property type="match status" value="1"/>
</dbReference>
<dbReference type="NCBIfam" id="TIGR01037">
    <property type="entry name" value="pyrD_sub1_fam"/>
    <property type="match status" value="1"/>
</dbReference>
<dbReference type="PANTHER" id="PTHR48109:SF1">
    <property type="entry name" value="DIHYDROOROTATE DEHYDROGENASE (FUMARATE)"/>
    <property type="match status" value="1"/>
</dbReference>
<dbReference type="PANTHER" id="PTHR48109">
    <property type="entry name" value="DIHYDROOROTATE DEHYDROGENASE (QUINONE), MITOCHONDRIAL-RELATED"/>
    <property type="match status" value="1"/>
</dbReference>
<dbReference type="Pfam" id="PF01180">
    <property type="entry name" value="DHO_dh"/>
    <property type="match status" value="1"/>
</dbReference>
<dbReference type="PIRSF" id="PIRSF000164">
    <property type="entry name" value="DHO_oxidase"/>
    <property type="match status" value="1"/>
</dbReference>
<dbReference type="SUPFAM" id="SSF51395">
    <property type="entry name" value="FMN-linked oxidoreductases"/>
    <property type="match status" value="1"/>
</dbReference>
<dbReference type="PROSITE" id="PS00912">
    <property type="entry name" value="DHODEHASE_2"/>
    <property type="match status" value="1"/>
</dbReference>
<name>PYRDB_METAR</name>
<protein>
    <recommendedName>
        <fullName>Dihydroorotate dehydrogenase B (NAD(+)), catalytic subunit</fullName>
        <shortName>DHOD B</shortName>
        <shortName>DHODase B</shortName>
        <shortName>DHOdehase B</shortName>
        <ecNumber>1.3.1.14</ecNumber>
    </recommendedName>
    <alternativeName>
        <fullName>Dihydroorotate oxidase B</fullName>
    </alternativeName>
    <alternativeName>
        <fullName>Orotate reductase (NADH)</fullName>
    </alternativeName>
</protein>
<comment type="function">
    <text evidence="1">Catalyzes the conversion of dihydroorotate to orotate with NAD(+) as electron acceptor.</text>
</comment>
<comment type="catalytic activity">
    <reaction>
        <text>(S)-dihydroorotate + NAD(+) = orotate + NADH + H(+)</text>
        <dbReference type="Rhea" id="RHEA:13513"/>
        <dbReference type="ChEBI" id="CHEBI:15378"/>
        <dbReference type="ChEBI" id="CHEBI:30839"/>
        <dbReference type="ChEBI" id="CHEBI:30864"/>
        <dbReference type="ChEBI" id="CHEBI:57540"/>
        <dbReference type="ChEBI" id="CHEBI:57945"/>
        <dbReference type="EC" id="1.3.1.14"/>
    </reaction>
</comment>
<comment type="cofactor">
    <cofactor evidence="1">
        <name>FMN</name>
        <dbReference type="ChEBI" id="CHEBI:58210"/>
    </cofactor>
    <text evidence="1">Binds 1 FMN per subunit.</text>
</comment>
<comment type="pathway">
    <text>Pyrimidine metabolism; UMP biosynthesis via de novo pathway; orotate from (S)-dihydroorotate (NAD(+) route): step 1/1.</text>
</comment>
<comment type="subunit">
    <text evidence="1">Heterotetramer of 2 PyrK and 2 PyrD type B subunits.</text>
</comment>
<comment type="subcellular location">
    <subcellularLocation>
        <location evidence="1">Cytoplasm</location>
    </subcellularLocation>
</comment>
<comment type="similarity">
    <text evidence="2">Belongs to the dihydroorotate dehydrogenase family. Type 1 subfamily.</text>
</comment>
<keyword id="KW-0963">Cytoplasm</keyword>
<keyword id="KW-0285">Flavoprotein</keyword>
<keyword id="KW-0288">FMN</keyword>
<keyword id="KW-0520">NAD</keyword>
<keyword id="KW-0560">Oxidoreductase</keyword>
<keyword id="KW-0665">Pyrimidine biosynthesis</keyword>
<keyword id="KW-1185">Reference proteome</keyword>